<accession>P77962</accession>
<keyword id="KW-0028">Amino-acid biosynthesis</keyword>
<keyword id="KW-0963">Cytoplasm</keyword>
<keyword id="KW-0554">One-carbon metabolism</keyword>
<keyword id="KW-0663">Pyridoxal phosphate</keyword>
<keyword id="KW-1185">Reference proteome</keyword>
<keyword id="KW-0808">Transferase</keyword>
<gene>
    <name evidence="1" type="primary">glyA</name>
    <name type="ordered locus">sll1931</name>
</gene>
<sequence>MNQTNLDFLATSDPALAAIIDRELQRQRTHIELIASENFTSAAVMAAQGSVLTNKYAEGLPGKRYYGGCEFVDQAETLAISRVKELFGAAHANVQPHSGAQANFAVFLTLLQPGDTIMGMDLSHGGHLTHGSPVNVSGKWFEVAHYGVEKETGRLDYDKIRQQALEVKPKLLICGYSAYPRQIEFDKFRAIADEVGAYLMADIAHIAGLVASGHHPSPLPYCDVVTTTTHKTLRGPRGGLIMTNNEELGKKFDKSVFPGTQGGPLEHVITAKAVAFGEALKPEFKVYSGQVIANAQAMADQLQKRGFDLVSGGTDNHLMLVDLRSIAMTGKVGDQLLGEINITANKNTVPFDPESPFVTSGLRLGSPAMTTRGMQEDEFRTIANIIADRLLSPEDEGVKADCLRRVSELCAGFPLYDHLRIPVAVIA</sequence>
<feature type="chain" id="PRO_0000113683" description="Serine hydroxymethyltransferase">
    <location>
        <begin position="1"/>
        <end position="427"/>
    </location>
</feature>
<feature type="binding site" evidence="1">
    <location>
        <position position="122"/>
    </location>
    <ligand>
        <name>(6S)-5,6,7,8-tetrahydrofolate</name>
        <dbReference type="ChEBI" id="CHEBI:57453"/>
    </ligand>
</feature>
<feature type="binding site" evidence="1">
    <location>
        <begin position="126"/>
        <end position="128"/>
    </location>
    <ligand>
        <name>(6S)-5,6,7,8-tetrahydrofolate</name>
        <dbReference type="ChEBI" id="CHEBI:57453"/>
    </ligand>
</feature>
<feature type="binding site" evidence="1">
    <location>
        <position position="247"/>
    </location>
    <ligand>
        <name>(6S)-5,6,7,8-tetrahydrofolate</name>
        <dbReference type="ChEBI" id="CHEBI:57453"/>
    </ligand>
</feature>
<feature type="binding site" evidence="1">
    <location>
        <begin position="355"/>
        <end position="357"/>
    </location>
    <ligand>
        <name>(6S)-5,6,7,8-tetrahydrofolate</name>
        <dbReference type="ChEBI" id="CHEBI:57453"/>
    </ligand>
</feature>
<feature type="site" description="Plays an important role in substrate specificity" evidence="1">
    <location>
        <position position="230"/>
    </location>
</feature>
<feature type="modified residue" description="N6-(pyridoxal phosphate)lysine" evidence="1">
    <location>
        <position position="231"/>
    </location>
</feature>
<comment type="function">
    <text evidence="1">Catalyzes the reversible interconversion of serine and glycine with tetrahydrofolate (THF) serving as the one-carbon carrier. This reaction serves as the major source of one-carbon groups required for the biosynthesis of purines, thymidylate, methionine, and other important biomolecules. Also exhibits THF-independent aldolase activity toward beta-hydroxyamino acids, producing glycine and aldehydes, via a retro-aldol mechanism.</text>
</comment>
<comment type="catalytic activity">
    <reaction evidence="1">
        <text>(6R)-5,10-methylene-5,6,7,8-tetrahydrofolate + glycine + H2O = (6S)-5,6,7,8-tetrahydrofolate + L-serine</text>
        <dbReference type="Rhea" id="RHEA:15481"/>
        <dbReference type="ChEBI" id="CHEBI:15377"/>
        <dbReference type="ChEBI" id="CHEBI:15636"/>
        <dbReference type="ChEBI" id="CHEBI:33384"/>
        <dbReference type="ChEBI" id="CHEBI:57305"/>
        <dbReference type="ChEBI" id="CHEBI:57453"/>
        <dbReference type="EC" id="2.1.2.1"/>
    </reaction>
</comment>
<comment type="cofactor">
    <cofactor evidence="1">
        <name>pyridoxal 5'-phosphate</name>
        <dbReference type="ChEBI" id="CHEBI:597326"/>
    </cofactor>
</comment>
<comment type="pathway">
    <text evidence="1">One-carbon metabolism; tetrahydrofolate interconversion.</text>
</comment>
<comment type="pathway">
    <text evidence="1">Amino-acid biosynthesis; glycine biosynthesis; glycine from L-serine: step 1/1.</text>
</comment>
<comment type="subunit">
    <text evidence="1">Homodimer.</text>
</comment>
<comment type="subcellular location">
    <subcellularLocation>
        <location evidence="1">Cytoplasm</location>
    </subcellularLocation>
</comment>
<comment type="similarity">
    <text evidence="1">Belongs to the SHMT family.</text>
</comment>
<reference key="1">
    <citation type="journal article" date="1996" name="DNA Res.">
        <title>Sequence analysis of the genome of the unicellular cyanobacterium Synechocystis sp. strain PCC6803. II. Sequence determination of the entire genome and assignment of potential protein-coding regions.</title>
        <authorList>
            <person name="Kaneko T."/>
            <person name="Sato S."/>
            <person name="Kotani H."/>
            <person name="Tanaka A."/>
            <person name="Asamizu E."/>
            <person name="Nakamura Y."/>
            <person name="Miyajima N."/>
            <person name="Hirosawa M."/>
            <person name="Sugiura M."/>
            <person name="Sasamoto S."/>
            <person name="Kimura T."/>
            <person name="Hosouchi T."/>
            <person name="Matsuno A."/>
            <person name="Muraki A."/>
            <person name="Nakazaki N."/>
            <person name="Naruo K."/>
            <person name="Okumura S."/>
            <person name="Shimpo S."/>
            <person name="Takeuchi C."/>
            <person name="Wada T."/>
            <person name="Watanabe A."/>
            <person name="Yamada M."/>
            <person name="Yasuda M."/>
            <person name="Tabata S."/>
        </authorList>
    </citation>
    <scope>NUCLEOTIDE SEQUENCE [LARGE SCALE GENOMIC DNA]</scope>
    <source>
        <strain>ATCC 27184 / PCC 6803 / Kazusa</strain>
    </source>
</reference>
<organism>
    <name type="scientific">Synechocystis sp. (strain ATCC 27184 / PCC 6803 / Kazusa)</name>
    <dbReference type="NCBI Taxonomy" id="1111708"/>
    <lineage>
        <taxon>Bacteria</taxon>
        <taxon>Bacillati</taxon>
        <taxon>Cyanobacteriota</taxon>
        <taxon>Cyanophyceae</taxon>
        <taxon>Synechococcales</taxon>
        <taxon>Merismopediaceae</taxon>
        <taxon>Synechocystis</taxon>
    </lineage>
</organism>
<evidence type="ECO:0000255" key="1">
    <source>
        <dbReference type="HAMAP-Rule" id="MF_00051"/>
    </source>
</evidence>
<protein>
    <recommendedName>
        <fullName evidence="1">Serine hydroxymethyltransferase</fullName>
        <shortName evidence="1">SHMT</shortName>
        <shortName evidence="1">Serine methylase</shortName>
        <ecNumber evidence="1">2.1.2.1</ecNumber>
    </recommendedName>
</protein>
<name>GLYA_SYNY3</name>
<dbReference type="EC" id="2.1.2.1" evidence="1"/>
<dbReference type="EMBL" id="BA000022">
    <property type="protein sequence ID" value="BAA17124.1"/>
    <property type="molecule type" value="Genomic_DNA"/>
</dbReference>
<dbReference type="PIR" id="S75210">
    <property type="entry name" value="S75210"/>
</dbReference>
<dbReference type="SMR" id="P77962"/>
<dbReference type="FunCoup" id="P77962">
    <property type="interactions" value="454"/>
</dbReference>
<dbReference type="IntAct" id="P77962">
    <property type="interactions" value="2"/>
</dbReference>
<dbReference type="STRING" id="1148.gene:10497985"/>
<dbReference type="PaxDb" id="1148-1652200"/>
<dbReference type="EnsemblBacteria" id="BAA17124">
    <property type="protein sequence ID" value="BAA17124"/>
    <property type="gene ID" value="BAA17124"/>
</dbReference>
<dbReference type="KEGG" id="syn:sll1931"/>
<dbReference type="eggNOG" id="COG0112">
    <property type="taxonomic scope" value="Bacteria"/>
</dbReference>
<dbReference type="InParanoid" id="P77962"/>
<dbReference type="PhylomeDB" id="P77962"/>
<dbReference type="BioCyc" id="MetaCyc:MONOMER-22029"/>
<dbReference type="UniPathway" id="UPA00193"/>
<dbReference type="UniPathway" id="UPA00288">
    <property type="reaction ID" value="UER01023"/>
</dbReference>
<dbReference type="Proteomes" id="UP000001425">
    <property type="component" value="Chromosome"/>
</dbReference>
<dbReference type="GO" id="GO:0005737">
    <property type="term" value="C:cytoplasm"/>
    <property type="evidence" value="ECO:0000318"/>
    <property type="project" value="GO_Central"/>
</dbReference>
<dbReference type="GO" id="GO:0005829">
    <property type="term" value="C:cytosol"/>
    <property type="evidence" value="ECO:0000318"/>
    <property type="project" value="GO_Central"/>
</dbReference>
<dbReference type="GO" id="GO:0004372">
    <property type="term" value="F:glycine hydroxymethyltransferase activity"/>
    <property type="evidence" value="ECO:0000318"/>
    <property type="project" value="GO_Central"/>
</dbReference>
<dbReference type="GO" id="GO:0030170">
    <property type="term" value="F:pyridoxal phosphate binding"/>
    <property type="evidence" value="ECO:0000318"/>
    <property type="project" value="GO_Central"/>
</dbReference>
<dbReference type="GO" id="GO:0019264">
    <property type="term" value="P:glycine biosynthetic process from serine"/>
    <property type="evidence" value="ECO:0000318"/>
    <property type="project" value="GO_Central"/>
</dbReference>
<dbReference type="GO" id="GO:0035999">
    <property type="term" value="P:tetrahydrofolate interconversion"/>
    <property type="evidence" value="ECO:0007669"/>
    <property type="project" value="UniProtKB-UniRule"/>
</dbReference>
<dbReference type="GO" id="GO:0046653">
    <property type="term" value="P:tetrahydrofolate metabolic process"/>
    <property type="evidence" value="ECO:0000318"/>
    <property type="project" value="GO_Central"/>
</dbReference>
<dbReference type="CDD" id="cd00378">
    <property type="entry name" value="SHMT"/>
    <property type="match status" value="1"/>
</dbReference>
<dbReference type="FunFam" id="3.40.640.10:FF:000001">
    <property type="entry name" value="Serine hydroxymethyltransferase"/>
    <property type="match status" value="1"/>
</dbReference>
<dbReference type="FunFam" id="3.90.1150.10:FF:000003">
    <property type="entry name" value="Serine hydroxymethyltransferase"/>
    <property type="match status" value="1"/>
</dbReference>
<dbReference type="Gene3D" id="3.90.1150.10">
    <property type="entry name" value="Aspartate Aminotransferase, domain 1"/>
    <property type="match status" value="1"/>
</dbReference>
<dbReference type="Gene3D" id="3.40.640.10">
    <property type="entry name" value="Type I PLP-dependent aspartate aminotransferase-like (Major domain)"/>
    <property type="match status" value="1"/>
</dbReference>
<dbReference type="HAMAP" id="MF_00051">
    <property type="entry name" value="SHMT"/>
    <property type="match status" value="1"/>
</dbReference>
<dbReference type="InterPro" id="IPR015424">
    <property type="entry name" value="PyrdxlP-dep_Trfase"/>
</dbReference>
<dbReference type="InterPro" id="IPR015421">
    <property type="entry name" value="PyrdxlP-dep_Trfase_major"/>
</dbReference>
<dbReference type="InterPro" id="IPR015422">
    <property type="entry name" value="PyrdxlP-dep_Trfase_small"/>
</dbReference>
<dbReference type="InterPro" id="IPR001085">
    <property type="entry name" value="Ser_HO-MeTrfase"/>
</dbReference>
<dbReference type="InterPro" id="IPR049943">
    <property type="entry name" value="Ser_HO-MeTrfase-like"/>
</dbReference>
<dbReference type="InterPro" id="IPR019798">
    <property type="entry name" value="Ser_HO-MeTrfase_PLP_BS"/>
</dbReference>
<dbReference type="InterPro" id="IPR039429">
    <property type="entry name" value="SHMT-like_dom"/>
</dbReference>
<dbReference type="NCBIfam" id="NF000586">
    <property type="entry name" value="PRK00011.1"/>
    <property type="match status" value="1"/>
</dbReference>
<dbReference type="PANTHER" id="PTHR11680">
    <property type="entry name" value="SERINE HYDROXYMETHYLTRANSFERASE"/>
    <property type="match status" value="1"/>
</dbReference>
<dbReference type="PANTHER" id="PTHR11680:SF35">
    <property type="entry name" value="SERINE HYDROXYMETHYLTRANSFERASE 1"/>
    <property type="match status" value="1"/>
</dbReference>
<dbReference type="Pfam" id="PF00464">
    <property type="entry name" value="SHMT"/>
    <property type="match status" value="1"/>
</dbReference>
<dbReference type="PIRSF" id="PIRSF000412">
    <property type="entry name" value="SHMT"/>
    <property type="match status" value="1"/>
</dbReference>
<dbReference type="SUPFAM" id="SSF53383">
    <property type="entry name" value="PLP-dependent transferases"/>
    <property type="match status" value="1"/>
</dbReference>
<dbReference type="PROSITE" id="PS00096">
    <property type="entry name" value="SHMT"/>
    <property type="match status" value="1"/>
</dbReference>
<proteinExistence type="inferred from homology"/>